<accession>B1J805</accession>
<reference key="1">
    <citation type="submission" date="2008-02" db="EMBL/GenBank/DDBJ databases">
        <title>Complete sequence of Pseudomonas putida W619.</title>
        <authorList>
            <person name="Copeland A."/>
            <person name="Lucas S."/>
            <person name="Lapidus A."/>
            <person name="Barry K."/>
            <person name="Detter J.C."/>
            <person name="Glavina del Rio T."/>
            <person name="Dalin E."/>
            <person name="Tice H."/>
            <person name="Pitluck S."/>
            <person name="Chain P."/>
            <person name="Malfatti S."/>
            <person name="Shin M."/>
            <person name="Vergez L."/>
            <person name="Schmutz J."/>
            <person name="Larimer F."/>
            <person name="Land M."/>
            <person name="Hauser L."/>
            <person name="Kyrpides N."/>
            <person name="Kim E."/>
            <person name="Taghavi S."/>
            <person name="Vangronsveld D."/>
            <person name="van der Lelie D."/>
            <person name="Richardson P."/>
        </authorList>
    </citation>
    <scope>NUCLEOTIDE SEQUENCE [LARGE SCALE GENOMIC DNA]</scope>
    <source>
        <strain>W619</strain>
    </source>
</reference>
<sequence length="460" mass="51725">MLTIYNTLSKTKEVFKPLDGNKVRMYVCGMTVYDYCHLGHGRSMVAFDLVTRWLRKSGYELTYVRNITDIDDKIINRANENGETFDALTARMIDAMHEDERRLNILKPDQEPRATDHIAGMHAMIQTLIDKGYAYAPGNGDVYYRVGKFVGYGKLSRKKIEDLRIGARIEVDEAKQDPLDFVLWKGVKPGEPYWDSPWGPGRPGWHIECSVMSTCCLGESFDIHGGGSDLEFPHHENEIAQSEAATGKQYANAWMHCGMIRINGEKMSKSLNNFFTIRDVLDVYHPEVVRYLLVASHYRSAINYSEDSLRDAKGALERFYHALRGLPRVAAKGGEEFVERFSVAMNDDFGTPEACAVLFDLVREINRLRDSDPDAAAGLAGRLRELGDVLGVLQLEADDFLRAGAEGKVDAAEVEALIQARLQARADKNWAESDRIRDQLTAMGVVLEDSKGATTWRLAD</sequence>
<name>SYC_PSEPW</name>
<evidence type="ECO:0000255" key="1">
    <source>
        <dbReference type="HAMAP-Rule" id="MF_00041"/>
    </source>
</evidence>
<keyword id="KW-0030">Aminoacyl-tRNA synthetase</keyword>
<keyword id="KW-0067">ATP-binding</keyword>
<keyword id="KW-0963">Cytoplasm</keyword>
<keyword id="KW-0436">Ligase</keyword>
<keyword id="KW-0479">Metal-binding</keyword>
<keyword id="KW-0547">Nucleotide-binding</keyword>
<keyword id="KW-0648">Protein biosynthesis</keyword>
<keyword id="KW-0862">Zinc</keyword>
<organism>
    <name type="scientific">Pseudomonas putida (strain W619)</name>
    <dbReference type="NCBI Taxonomy" id="390235"/>
    <lineage>
        <taxon>Bacteria</taxon>
        <taxon>Pseudomonadati</taxon>
        <taxon>Pseudomonadota</taxon>
        <taxon>Gammaproteobacteria</taxon>
        <taxon>Pseudomonadales</taxon>
        <taxon>Pseudomonadaceae</taxon>
        <taxon>Pseudomonas</taxon>
    </lineage>
</organism>
<feature type="chain" id="PRO_1000090859" description="Cysteine--tRNA ligase">
    <location>
        <begin position="1"/>
        <end position="460"/>
    </location>
</feature>
<feature type="short sequence motif" description="'HIGH' region">
    <location>
        <begin position="30"/>
        <end position="40"/>
    </location>
</feature>
<feature type="short sequence motif" description="'KMSKS' region">
    <location>
        <begin position="266"/>
        <end position="270"/>
    </location>
</feature>
<feature type="binding site" evidence="1">
    <location>
        <position position="28"/>
    </location>
    <ligand>
        <name>Zn(2+)</name>
        <dbReference type="ChEBI" id="CHEBI:29105"/>
    </ligand>
</feature>
<feature type="binding site" evidence="1">
    <location>
        <position position="209"/>
    </location>
    <ligand>
        <name>Zn(2+)</name>
        <dbReference type="ChEBI" id="CHEBI:29105"/>
    </ligand>
</feature>
<feature type="binding site" evidence="1">
    <location>
        <position position="234"/>
    </location>
    <ligand>
        <name>Zn(2+)</name>
        <dbReference type="ChEBI" id="CHEBI:29105"/>
    </ligand>
</feature>
<feature type="binding site" evidence="1">
    <location>
        <position position="238"/>
    </location>
    <ligand>
        <name>Zn(2+)</name>
        <dbReference type="ChEBI" id="CHEBI:29105"/>
    </ligand>
</feature>
<feature type="binding site" evidence="1">
    <location>
        <position position="269"/>
    </location>
    <ligand>
        <name>ATP</name>
        <dbReference type="ChEBI" id="CHEBI:30616"/>
    </ligand>
</feature>
<comment type="catalytic activity">
    <reaction evidence="1">
        <text>tRNA(Cys) + L-cysteine + ATP = L-cysteinyl-tRNA(Cys) + AMP + diphosphate</text>
        <dbReference type="Rhea" id="RHEA:17773"/>
        <dbReference type="Rhea" id="RHEA-COMP:9661"/>
        <dbReference type="Rhea" id="RHEA-COMP:9679"/>
        <dbReference type="ChEBI" id="CHEBI:30616"/>
        <dbReference type="ChEBI" id="CHEBI:33019"/>
        <dbReference type="ChEBI" id="CHEBI:35235"/>
        <dbReference type="ChEBI" id="CHEBI:78442"/>
        <dbReference type="ChEBI" id="CHEBI:78517"/>
        <dbReference type="ChEBI" id="CHEBI:456215"/>
        <dbReference type="EC" id="6.1.1.16"/>
    </reaction>
</comment>
<comment type="cofactor">
    <cofactor evidence="1">
        <name>Zn(2+)</name>
        <dbReference type="ChEBI" id="CHEBI:29105"/>
    </cofactor>
    <text evidence="1">Binds 1 zinc ion per subunit.</text>
</comment>
<comment type="subunit">
    <text evidence="1">Monomer.</text>
</comment>
<comment type="subcellular location">
    <subcellularLocation>
        <location evidence="1">Cytoplasm</location>
    </subcellularLocation>
</comment>
<comment type="similarity">
    <text evidence="1">Belongs to the class-I aminoacyl-tRNA synthetase family.</text>
</comment>
<protein>
    <recommendedName>
        <fullName evidence="1">Cysteine--tRNA ligase</fullName>
        <ecNumber evidence="1">6.1.1.16</ecNumber>
    </recommendedName>
    <alternativeName>
        <fullName evidence="1">Cysteinyl-tRNA synthetase</fullName>
        <shortName evidence="1">CysRS</shortName>
    </alternativeName>
</protein>
<proteinExistence type="inferred from homology"/>
<gene>
    <name evidence="1" type="primary">cysS</name>
    <name type="ordered locus">PputW619_2407</name>
</gene>
<dbReference type="EC" id="6.1.1.16" evidence="1"/>
<dbReference type="EMBL" id="CP000949">
    <property type="protein sequence ID" value="ACA72907.1"/>
    <property type="molecule type" value="Genomic_DNA"/>
</dbReference>
<dbReference type="SMR" id="B1J805"/>
<dbReference type="STRING" id="390235.PputW619_2407"/>
<dbReference type="KEGG" id="ppw:PputW619_2407"/>
<dbReference type="eggNOG" id="COG0215">
    <property type="taxonomic scope" value="Bacteria"/>
</dbReference>
<dbReference type="HOGENOM" id="CLU_013528_0_1_6"/>
<dbReference type="OrthoDB" id="9815130at2"/>
<dbReference type="GO" id="GO:0005829">
    <property type="term" value="C:cytosol"/>
    <property type="evidence" value="ECO:0007669"/>
    <property type="project" value="TreeGrafter"/>
</dbReference>
<dbReference type="GO" id="GO:0005524">
    <property type="term" value="F:ATP binding"/>
    <property type="evidence" value="ECO:0007669"/>
    <property type="project" value="UniProtKB-UniRule"/>
</dbReference>
<dbReference type="GO" id="GO:0004817">
    <property type="term" value="F:cysteine-tRNA ligase activity"/>
    <property type="evidence" value="ECO:0007669"/>
    <property type="project" value="UniProtKB-UniRule"/>
</dbReference>
<dbReference type="GO" id="GO:0008270">
    <property type="term" value="F:zinc ion binding"/>
    <property type="evidence" value="ECO:0007669"/>
    <property type="project" value="UniProtKB-UniRule"/>
</dbReference>
<dbReference type="GO" id="GO:0006423">
    <property type="term" value="P:cysteinyl-tRNA aminoacylation"/>
    <property type="evidence" value="ECO:0007669"/>
    <property type="project" value="UniProtKB-UniRule"/>
</dbReference>
<dbReference type="CDD" id="cd07963">
    <property type="entry name" value="Anticodon_Ia_Cys"/>
    <property type="match status" value="1"/>
</dbReference>
<dbReference type="CDD" id="cd00672">
    <property type="entry name" value="CysRS_core"/>
    <property type="match status" value="1"/>
</dbReference>
<dbReference type="FunFam" id="3.40.50.620:FF:000009">
    <property type="entry name" value="Cysteine--tRNA ligase"/>
    <property type="match status" value="1"/>
</dbReference>
<dbReference type="Gene3D" id="1.20.120.1910">
    <property type="entry name" value="Cysteine-tRNA ligase, C-terminal anti-codon recognition domain"/>
    <property type="match status" value="1"/>
</dbReference>
<dbReference type="Gene3D" id="3.40.50.620">
    <property type="entry name" value="HUPs"/>
    <property type="match status" value="1"/>
</dbReference>
<dbReference type="HAMAP" id="MF_00041">
    <property type="entry name" value="Cys_tRNA_synth"/>
    <property type="match status" value="1"/>
</dbReference>
<dbReference type="InterPro" id="IPR015803">
    <property type="entry name" value="Cys-tRNA-ligase"/>
</dbReference>
<dbReference type="InterPro" id="IPR015273">
    <property type="entry name" value="Cys-tRNA-synt_Ia_DALR"/>
</dbReference>
<dbReference type="InterPro" id="IPR024909">
    <property type="entry name" value="Cys-tRNA/MSH_ligase"/>
</dbReference>
<dbReference type="InterPro" id="IPR056411">
    <property type="entry name" value="CysS_C"/>
</dbReference>
<dbReference type="InterPro" id="IPR014729">
    <property type="entry name" value="Rossmann-like_a/b/a_fold"/>
</dbReference>
<dbReference type="InterPro" id="IPR032678">
    <property type="entry name" value="tRNA-synt_1_cat_dom"/>
</dbReference>
<dbReference type="InterPro" id="IPR009080">
    <property type="entry name" value="tRNAsynth_Ia_anticodon-bd"/>
</dbReference>
<dbReference type="NCBIfam" id="TIGR00435">
    <property type="entry name" value="cysS"/>
    <property type="match status" value="1"/>
</dbReference>
<dbReference type="PANTHER" id="PTHR10890:SF3">
    <property type="entry name" value="CYSTEINE--TRNA LIGASE, CYTOPLASMIC"/>
    <property type="match status" value="1"/>
</dbReference>
<dbReference type="PANTHER" id="PTHR10890">
    <property type="entry name" value="CYSTEINYL-TRNA SYNTHETASE"/>
    <property type="match status" value="1"/>
</dbReference>
<dbReference type="Pfam" id="PF23493">
    <property type="entry name" value="CysS_C"/>
    <property type="match status" value="1"/>
</dbReference>
<dbReference type="Pfam" id="PF09190">
    <property type="entry name" value="DALR_2"/>
    <property type="match status" value="1"/>
</dbReference>
<dbReference type="Pfam" id="PF01406">
    <property type="entry name" value="tRNA-synt_1e"/>
    <property type="match status" value="1"/>
</dbReference>
<dbReference type="PRINTS" id="PR00983">
    <property type="entry name" value="TRNASYNTHCYS"/>
</dbReference>
<dbReference type="SMART" id="SM00840">
    <property type="entry name" value="DALR_2"/>
    <property type="match status" value="1"/>
</dbReference>
<dbReference type="SUPFAM" id="SSF47323">
    <property type="entry name" value="Anticodon-binding domain of a subclass of class I aminoacyl-tRNA synthetases"/>
    <property type="match status" value="1"/>
</dbReference>
<dbReference type="SUPFAM" id="SSF52374">
    <property type="entry name" value="Nucleotidylyl transferase"/>
    <property type="match status" value="1"/>
</dbReference>